<feature type="chain" id="PRO_1000017799" description="Methylglyoxal synthase">
    <location>
        <begin position="1"/>
        <end position="130"/>
    </location>
</feature>
<feature type="domain" description="MGS-like" evidence="1">
    <location>
        <begin position="1"/>
        <end position="130"/>
    </location>
</feature>
<feature type="active site" description="Proton donor/acceptor" evidence="1">
    <location>
        <position position="63"/>
    </location>
</feature>
<feature type="binding site" evidence="1">
    <location>
        <position position="11"/>
    </location>
    <ligand>
        <name>substrate</name>
    </ligand>
</feature>
<feature type="binding site" evidence="1">
    <location>
        <position position="15"/>
    </location>
    <ligand>
        <name>substrate</name>
    </ligand>
</feature>
<feature type="binding site" evidence="1">
    <location>
        <begin position="37"/>
        <end position="40"/>
    </location>
    <ligand>
        <name>substrate</name>
    </ligand>
</feature>
<feature type="binding site" evidence="1">
    <location>
        <begin position="57"/>
        <end position="58"/>
    </location>
    <ligand>
        <name>substrate</name>
    </ligand>
</feature>
<feature type="binding site" evidence="1">
    <location>
        <position position="90"/>
    </location>
    <ligand>
        <name>substrate</name>
    </ligand>
</feature>
<protein>
    <recommendedName>
        <fullName evidence="1">Methylglyoxal synthase</fullName>
        <shortName evidence="1">MGS</shortName>
        <ecNumber evidence="1">4.2.3.3</ecNumber>
    </recommendedName>
</protein>
<reference key="1">
    <citation type="journal article" date="2005" name="BMC Genomics">
        <title>Bacterial genome adaptation to niches: divergence of the potential virulence genes in three Burkholderia species of different survival strategies.</title>
        <authorList>
            <person name="Kim H.S."/>
            <person name="Schell M.A."/>
            <person name="Yu Y."/>
            <person name="Ulrich R.L."/>
            <person name="Sarria S.H."/>
            <person name="Nierman W.C."/>
            <person name="DeShazer D."/>
        </authorList>
    </citation>
    <scope>NUCLEOTIDE SEQUENCE [LARGE SCALE GENOMIC DNA]</scope>
    <source>
        <strain>ATCC 700388 / DSM 13276 / CCUG 48851 / CIP 106301 / E264</strain>
    </source>
</reference>
<accession>Q2SZS7</accession>
<evidence type="ECO:0000255" key="1">
    <source>
        <dbReference type="HAMAP-Rule" id="MF_00549"/>
    </source>
</evidence>
<proteinExistence type="inferred from homology"/>
<comment type="function">
    <text evidence="1">Catalyzes the formation of methylglyoxal from dihydroxyacetone phosphate.</text>
</comment>
<comment type="catalytic activity">
    <reaction evidence="1">
        <text>dihydroxyacetone phosphate = methylglyoxal + phosphate</text>
        <dbReference type="Rhea" id="RHEA:17937"/>
        <dbReference type="ChEBI" id="CHEBI:17158"/>
        <dbReference type="ChEBI" id="CHEBI:43474"/>
        <dbReference type="ChEBI" id="CHEBI:57642"/>
        <dbReference type="EC" id="4.2.3.3"/>
    </reaction>
</comment>
<comment type="similarity">
    <text evidence="1">Belongs to the methylglyoxal synthase family.</text>
</comment>
<name>MGSA_BURTA</name>
<dbReference type="EC" id="4.2.3.3" evidence="1"/>
<dbReference type="EMBL" id="CP000086">
    <property type="protein sequence ID" value="ABC36893.1"/>
    <property type="molecule type" value="Genomic_DNA"/>
</dbReference>
<dbReference type="RefSeq" id="WP_009892268.1">
    <property type="nucleotide sequence ID" value="NZ_CP008785.1"/>
</dbReference>
<dbReference type="SMR" id="Q2SZS7"/>
<dbReference type="GeneID" id="45120769"/>
<dbReference type="KEGG" id="bte:BTH_I1018"/>
<dbReference type="HOGENOM" id="CLU_120420_1_0_4"/>
<dbReference type="Proteomes" id="UP000001930">
    <property type="component" value="Chromosome I"/>
</dbReference>
<dbReference type="GO" id="GO:0005829">
    <property type="term" value="C:cytosol"/>
    <property type="evidence" value="ECO:0007669"/>
    <property type="project" value="TreeGrafter"/>
</dbReference>
<dbReference type="GO" id="GO:0008929">
    <property type="term" value="F:methylglyoxal synthase activity"/>
    <property type="evidence" value="ECO:0007669"/>
    <property type="project" value="UniProtKB-UniRule"/>
</dbReference>
<dbReference type="GO" id="GO:0019242">
    <property type="term" value="P:methylglyoxal biosynthetic process"/>
    <property type="evidence" value="ECO:0007669"/>
    <property type="project" value="UniProtKB-UniRule"/>
</dbReference>
<dbReference type="CDD" id="cd01422">
    <property type="entry name" value="MGS"/>
    <property type="match status" value="1"/>
</dbReference>
<dbReference type="Gene3D" id="3.40.50.1380">
    <property type="entry name" value="Methylglyoxal synthase-like domain"/>
    <property type="match status" value="1"/>
</dbReference>
<dbReference type="HAMAP" id="MF_00549">
    <property type="entry name" value="Methylglyoxal_synth"/>
    <property type="match status" value="1"/>
</dbReference>
<dbReference type="InterPro" id="IPR004363">
    <property type="entry name" value="Methylgl_synth"/>
</dbReference>
<dbReference type="InterPro" id="IPR018148">
    <property type="entry name" value="Methylglyoxal_synth_AS"/>
</dbReference>
<dbReference type="InterPro" id="IPR011607">
    <property type="entry name" value="MGS-like_dom"/>
</dbReference>
<dbReference type="InterPro" id="IPR036914">
    <property type="entry name" value="MGS-like_dom_sf"/>
</dbReference>
<dbReference type="NCBIfam" id="TIGR00160">
    <property type="entry name" value="MGSA"/>
    <property type="match status" value="1"/>
</dbReference>
<dbReference type="NCBIfam" id="NF003559">
    <property type="entry name" value="PRK05234.1"/>
    <property type="match status" value="1"/>
</dbReference>
<dbReference type="PANTHER" id="PTHR30492">
    <property type="entry name" value="METHYLGLYOXAL SYNTHASE"/>
    <property type="match status" value="1"/>
</dbReference>
<dbReference type="PANTHER" id="PTHR30492:SF0">
    <property type="entry name" value="METHYLGLYOXAL SYNTHASE"/>
    <property type="match status" value="1"/>
</dbReference>
<dbReference type="Pfam" id="PF02142">
    <property type="entry name" value="MGS"/>
    <property type="match status" value="1"/>
</dbReference>
<dbReference type="PIRSF" id="PIRSF006614">
    <property type="entry name" value="Methylglyox_syn"/>
    <property type="match status" value="1"/>
</dbReference>
<dbReference type="SMART" id="SM00851">
    <property type="entry name" value="MGS"/>
    <property type="match status" value="1"/>
</dbReference>
<dbReference type="SUPFAM" id="SSF52335">
    <property type="entry name" value="Methylglyoxal synthase-like"/>
    <property type="match status" value="1"/>
</dbReference>
<dbReference type="PROSITE" id="PS01335">
    <property type="entry name" value="METHYLGLYOXAL_SYNTH"/>
    <property type="match status" value="1"/>
</dbReference>
<dbReference type="PROSITE" id="PS51855">
    <property type="entry name" value="MGS"/>
    <property type="match status" value="1"/>
</dbReference>
<keyword id="KW-0456">Lyase</keyword>
<sequence>MSTPRIALIAHDAKKDEIVALAGAYRAALAQCRLVATGTTGGRIAQAHGLDVERKLSGPLGGDLQIGAELADGRVDIVIFLRDPMTAQPHDPDITALVRACDVHDVPVATNVATARVLLDDLARRLPVKA</sequence>
<gene>
    <name evidence="1" type="primary">mgsA</name>
    <name type="ordered locus">BTH_I1018</name>
</gene>
<organism>
    <name type="scientific">Burkholderia thailandensis (strain ATCC 700388 / DSM 13276 / CCUG 48851 / CIP 106301 / E264)</name>
    <dbReference type="NCBI Taxonomy" id="271848"/>
    <lineage>
        <taxon>Bacteria</taxon>
        <taxon>Pseudomonadati</taxon>
        <taxon>Pseudomonadota</taxon>
        <taxon>Betaproteobacteria</taxon>
        <taxon>Burkholderiales</taxon>
        <taxon>Burkholderiaceae</taxon>
        <taxon>Burkholderia</taxon>
        <taxon>pseudomallei group</taxon>
    </lineage>
</organism>